<proteinExistence type="predicted"/>
<sequence length="74" mass="9009">MYKKMLKKAIKNADRHYEDACNLPYETVDESKIQWTELKEKDLKRIEEEKKIIETINQIQKKYIHTVQQQNTNI</sequence>
<reference key="1">
    <citation type="journal article" date="2001" name="Virology">
        <title>Analysis of the first complete DNA sequence of an invertebrate iridovirus: coding strategy of the genome of Chilo iridescent virus.</title>
        <authorList>
            <person name="Jakob N.J."/>
            <person name="Mueller K."/>
            <person name="Bahr U."/>
            <person name="Darai G."/>
        </authorList>
    </citation>
    <scope>NUCLEOTIDE SEQUENCE [LARGE SCALE GENOMIC DNA]</scope>
</reference>
<reference key="2">
    <citation type="journal article" date="2007" name="Virol. J.">
        <title>Comparative genomic analysis of the family Iridoviridae: re-annotating and defining the core set of iridovirus genes.</title>
        <authorList>
            <person name="Eaton H.E."/>
            <person name="Metcalf J."/>
            <person name="Penny E."/>
            <person name="Tcherepanov V."/>
            <person name="Upton C."/>
            <person name="Brunetti C.R."/>
        </authorList>
    </citation>
    <scope>GENOME REANNOTATION</scope>
</reference>
<name>301L_IIV6</name>
<dbReference type="EMBL" id="AF303741">
    <property type="protein sequence ID" value="AAK82162.1"/>
    <property type="molecule type" value="Genomic_DNA"/>
</dbReference>
<dbReference type="RefSeq" id="NP_149764.1">
    <property type="nucleotide sequence ID" value="NC_003038.1"/>
</dbReference>
<dbReference type="SMR" id="Q91FM3"/>
<dbReference type="KEGG" id="vg:1732963"/>
<dbReference type="Proteomes" id="UP000001359">
    <property type="component" value="Genome"/>
</dbReference>
<accession>Q91FM3</accession>
<protein>
    <recommendedName>
        <fullName>Uncharacterized protein 301L</fullName>
    </recommendedName>
</protein>
<keyword id="KW-1185">Reference proteome</keyword>
<organism>
    <name type="scientific">Invertebrate iridescent virus 6</name>
    <name type="common">IIV-6</name>
    <name type="synonym">Chilo iridescent virus</name>
    <dbReference type="NCBI Taxonomy" id="176652"/>
    <lineage>
        <taxon>Viruses</taxon>
        <taxon>Varidnaviria</taxon>
        <taxon>Bamfordvirae</taxon>
        <taxon>Nucleocytoviricota</taxon>
        <taxon>Megaviricetes</taxon>
        <taxon>Pimascovirales</taxon>
        <taxon>Iridoviridae</taxon>
        <taxon>Betairidovirinae</taxon>
        <taxon>Iridovirus</taxon>
    </lineage>
</organism>
<gene>
    <name type="ORF">IIV6-301L</name>
</gene>
<organismHost>
    <name type="scientific">Acheta domesticus</name>
    <name type="common">House cricket</name>
    <dbReference type="NCBI Taxonomy" id="6997"/>
</organismHost>
<organismHost>
    <name type="scientific">Chilo suppressalis</name>
    <name type="common">Asiatic rice borer moth</name>
    <dbReference type="NCBI Taxonomy" id="168631"/>
</organismHost>
<organismHost>
    <name type="scientific">Gryllus bimaculatus</name>
    <name type="common">Two-spotted cricket</name>
    <dbReference type="NCBI Taxonomy" id="6999"/>
</organismHost>
<organismHost>
    <name type="scientific">Gryllus campestris</name>
    <dbReference type="NCBI Taxonomy" id="58607"/>
</organismHost>
<organismHost>
    <name type="scientific">Spodoptera frugiperda</name>
    <name type="common">Fall armyworm</name>
    <dbReference type="NCBI Taxonomy" id="7108"/>
</organismHost>
<feature type="chain" id="PRO_0000377848" description="Uncharacterized protein 301L">
    <location>
        <begin position="1"/>
        <end position="74"/>
    </location>
</feature>